<accession>P20312</accession>
<dbReference type="EMBL" id="X17255">
    <property type="protein sequence ID" value="CAA35129.1"/>
    <property type="molecule type" value="Genomic_DNA"/>
</dbReference>
<dbReference type="EMBL" id="X05031">
    <property type="protein sequence ID" value="CAA28704.1"/>
    <property type="molecule type" value="Genomic_DNA"/>
</dbReference>
<dbReference type="PIR" id="S07501">
    <property type="entry name" value="S07501"/>
</dbReference>
<dbReference type="RefSeq" id="NP_523309.1">
    <property type="nucleotide sequence ID" value="NC_003298.1"/>
</dbReference>
<dbReference type="SMR" id="P20312"/>
<dbReference type="KEGG" id="vg:927447"/>
<organismHost>
    <name type="scientific">Escherichia coli</name>
    <dbReference type="NCBI Taxonomy" id="562"/>
</organismHost>
<name>Y18_BPT3</name>
<sequence length="43" mass="5070">MTLRECCDWCAAKWNQAIEDGDKAAADAYQQLYALWERRFKEA</sequence>
<reference key="1">
    <citation type="journal article" date="1987" name="J. Mol. Biol.">
        <title>Sequence of a conditionally essential region of bacteriophage T3, including the primary origin of DNA replication.</title>
        <authorList>
            <person name="Schmitt M.P."/>
            <person name="Beck P.J."/>
            <person name="Kearney C.A."/>
            <person name="Spence J.L."/>
            <person name="Digiovanni D."/>
            <person name="Condreay J.P."/>
            <person name="Molineux I.J."/>
        </authorList>
    </citation>
    <scope>NUCLEOTIDE SEQUENCE [GENOMIC DNA]</scope>
    <source>
        <strain>Luria</strain>
    </source>
</reference>
<organism>
    <name type="scientific">Enterobacteria phage T3</name>
    <name type="common">Bacteriophage T3</name>
    <dbReference type="NCBI Taxonomy" id="10759"/>
    <lineage>
        <taxon>Viruses</taxon>
        <taxon>Duplodnaviria</taxon>
        <taxon>Heunggongvirae</taxon>
        <taxon>Uroviricota</taxon>
        <taxon>Caudoviricetes</taxon>
        <taxon>Autographiviridae</taxon>
        <taxon>Studiervirinae</taxon>
        <taxon>Teetrevirus</taxon>
        <taxon>Teetrevirus T3</taxon>
    </lineage>
</organism>
<gene>
    <name type="primary">1.8</name>
</gene>
<protein>
    <recommendedName>
        <fullName>Uncharacterized gene 1.8 protein</fullName>
    </recommendedName>
</protein>
<proteinExistence type="predicted"/>
<feature type="chain" id="PRO_0000106478" description="Uncharacterized gene 1.8 protein">
    <location>
        <begin position="1"/>
        <end position="43"/>
    </location>
</feature>